<name>S61G1_GRYOR</name>
<comment type="function">
    <text evidence="1">Necessary for protein translocation in the endoplasmic reticulum.</text>
</comment>
<comment type="subunit">
    <text evidence="1">Heterotrimeric complex composed of SEC61-alpha, SEC61-beta and SEC61-gamma.</text>
</comment>
<comment type="subcellular location">
    <subcellularLocation>
        <location evidence="3">Endoplasmic reticulum membrane</location>
        <topology evidence="3">Single-pass membrane protein</topology>
    </subcellularLocation>
</comment>
<comment type="similarity">
    <text evidence="3">Belongs to the SecE/SEC61-gamma family.</text>
</comment>
<gene>
    <name type="primary">SEC61G</name>
</gene>
<proteinExistence type="inferred from homology"/>
<accession>Q7Z1B8</accession>
<feature type="chain" id="PRO_0000104204" description="Protein transport protein Sec61 subunit gamma">
    <location>
        <begin position="1"/>
        <end position="68"/>
    </location>
</feature>
<feature type="topological domain" description="Cytoplasmic" evidence="2">
    <location>
        <begin position="1"/>
        <end position="32"/>
    </location>
</feature>
<feature type="transmembrane region" description="Helical" evidence="2">
    <location>
        <begin position="33"/>
        <end position="61"/>
    </location>
</feature>
<feature type="topological domain" description="Extracellular" evidence="2">
    <location>
        <begin position="62"/>
        <end position="68"/>
    </location>
</feature>
<evidence type="ECO:0000250" key="1"/>
<evidence type="ECO:0000255" key="2"/>
<evidence type="ECO:0000305" key="3"/>
<organism>
    <name type="scientific">Gryllotalpa orientalis</name>
    <name type="common">Oriental mole cricket</name>
    <dbReference type="NCBI Taxonomy" id="213494"/>
    <lineage>
        <taxon>Eukaryota</taxon>
        <taxon>Metazoa</taxon>
        <taxon>Ecdysozoa</taxon>
        <taxon>Arthropoda</taxon>
        <taxon>Hexapoda</taxon>
        <taxon>Insecta</taxon>
        <taxon>Pterygota</taxon>
        <taxon>Neoptera</taxon>
        <taxon>Polyneoptera</taxon>
        <taxon>Orthoptera</taxon>
        <taxon>Ensifera</taxon>
        <taxon>Gryllidea</taxon>
        <taxon>Gryllotalpoidea</taxon>
        <taxon>Gryllotalpidae</taxon>
        <taxon>Gryllotalpinae</taxon>
        <taxon>Gryllotalpa</taxon>
    </lineage>
</organism>
<keyword id="KW-0256">Endoplasmic reticulum</keyword>
<keyword id="KW-0472">Membrane</keyword>
<keyword id="KW-0653">Protein transport</keyword>
<keyword id="KW-0811">Translocation</keyword>
<keyword id="KW-0812">Transmembrane</keyword>
<keyword id="KW-1133">Transmembrane helix</keyword>
<keyword id="KW-0813">Transport</keyword>
<reference key="1">
    <citation type="journal article" date="2002" name="Int. J. Ind. Entomol.">
        <title>Molecular cloning of the Sec61p gamma subunit homolog gene from the mole cricket, Gryllotalpa orientalis.</title>
        <authorList>
            <person name="Kim I."/>
            <person name="Lee K.-S."/>
            <person name="Jin B.-R."/>
            <person name="Kim E.-S."/>
            <person name="Lee H.-S."/>
            <person name="Ahn M.-Y."/>
            <person name="Sohn H.-D."/>
            <person name="Ryu K.-S."/>
        </authorList>
    </citation>
    <scope>NUCLEOTIDE SEQUENCE [MRNA]</scope>
</reference>
<sequence>MDQVTKFIEPGRQFAKDSIRLVKRCTKPDRKEFQKIAVATAIGFCIMGFIGFFVKLIHIPINNIIVGS</sequence>
<dbReference type="EMBL" id="AF540908">
    <property type="protein sequence ID" value="AAP47228.1"/>
    <property type="molecule type" value="mRNA"/>
</dbReference>
<dbReference type="SMR" id="Q7Z1B8"/>
<dbReference type="GO" id="GO:0005789">
    <property type="term" value="C:endoplasmic reticulum membrane"/>
    <property type="evidence" value="ECO:0007669"/>
    <property type="project" value="UniProtKB-SubCell"/>
</dbReference>
<dbReference type="GO" id="GO:0008320">
    <property type="term" value="F:protein transmembrane transporter activity"/>
    <property type="evidence" value="ECO:0000250"/>
    <property type="project" value="UniProtKB"/>
</dbReference>
<dbReference type="GO" id="GO:0006886">
    <property type="term" value="P:intracellular protein transport"/>
    <property type="evidence" value="ECO:0007669"/>
    <property type="project" value="InterPro"/>
</dbReference>
<dbReference type="GO" id="GO:0045047">
    <property type="term" value="P:protein targeting to ER"/>
    <property type="evidence" value="ECO:0000250"/>
    <property type="project" value="UniProtKB"/>
</dbReference>
<dbReference type="FunFam" id="1.20.5.820:FF:000001">
    <property type="entry name" value="Transport protein Sec61 subunit gamma"/>
    <property type="match status" value="1"/>
</dbReference>
<dbReference type="Gene3D" id="1.20.5.820">
    <property type="entry name" value="Preprotein translocase SecE subunit"/>
    <property type="match status" value="1"/>
</dbReference>
<dbReference type="HAMAP" id="MF_00422">
    <property type="entry name" value="SecE"/>
    <property type="match status" value="1"/>
</dbReference>
<dbReference type="InterPro" id="IPR023391">
    <property type="entry name" value="Prot_translocase_SecE_dom_sf"/>
</dbReference>
<dbReference type="InterPro" id="IPR008158">
    <property type="entry name" value="Translocase_Sec61-g"/>
</dbReference>
<dbReference type="InterPro" id="IPR001901">
    <property type="entry name" value="Translocase_SecE/Sec61-g"/>
</dbReference>
<dbReference type="NCBIfam" id="TIGR00327">
    <property type="entry name" value="secE_euk_arch"/>
    <property type="match status" value="1"/>
</dbReference>
<dbReference type="PANTHER" id="PTHR12309">
    <property type="entry name" value="SEC61 GAMMA SUBUNIT"/>
    <property type="match status" value="1"/>
</dbReference>
<dbReference type="Pfam" id="PF00584">
    <property type="entry name" value="SecE"/>
    <property type="match status" value="1"/>
</dbReference>
<dbReference type="SUPFAM" id="SSF103456">
    <property type="entry name" value="Preprotein translocase SecE subunit"/>
    <property type="match status" value="1"/>
</dbReference>
<dbReference type="PROSITE" id="PS01067">
    <property type="entry name" value="SECE_SEC61G"/>
    <property type="match status" value="1"/>
</dbReference>
<protein>
    <recommendedName>
        <fullName>Protein transport protein Sec61 subunit gamma</fullName>
    </recommendedName>
</protein>